<protein>
    <recommendedName>
        <fullName evidence="1">Probable GTP-binding protein EngB</fullName>
    </recommendedName>
</protein>
<name>ENGB_RICB8</name>
<keyword id="KW-0131">Cell cycle</keyword>
<keyword id="KW-0132">Cell division</keyword>
<keyword id="KW-0342">GTP-binding</keyword>
<keyword id="KW-0460">Magnesium</keyword>
<keyword id="KW-0479">Metal-binding</keyword>
<keyword id="KW-0547">Nucleotide-binding</keyword>
<keyword id="KW-0717">Septation</keyword>
<sequence>MTDEKVINKKLVGDNKLFRHQAKFVAGAMDIKQLPNFALPQIAFVGKSNVGKSSLINTICNNKKLAKVSNTPGRTRQINFFNLVDKLIIVDLPGYGFAQVPNQVKDQWEILINHYLRKSDNLKLVNLLIDSRRGIKENDKKVAELLLANKRDFQIIFTKSDKVTDRKNLNLEAQNFLATLNYSCNLIYVSSRSKEGARELKTSLAKCIKLEK</sequence>
<comment type="function">
    <text evidence="1">Necessary for normal cell division and for the maintenance of normal septation.</text>
</comment>
<comment type="cofactor">
    <cofactor evidence="1">
        <name>Mg(2+)</name>
        <dbReference type="ChEBI" id="CHEBI:18420"/>
    </cofactor>
</comment>
<comment type="similarity">
    <text evidence="1">Belongs to the TRAFAC class TrmE-Era-EngA-EngB-Septin-like GTPase superfamily. EngB GTPase family.</text>
</comment>
<feature type="chain" id="PRO_1000005848" description="Probable GTP-binding protein EngB">
    <location>
        <begin position="1"/>
        <end position="212"/>
    </location>
</feature>
<feature type="domain" description="EngB-type G" evidence="1">
    <location>
        <begin position="38"/>
        <end position="210"/>
    </location>
</feature>
<feature type="binding site" evidence="1">
    <location>
        <begin position="46"/>
        <end position="53"/>
    </location>
    <ligand>
        <name>GTP</name>
        <dbReference type="ChEBI" id="CHEBI:37565"/>
    </ligand>
</feature>
<feature type="binding site" evidence="1">
    <location>
        <position position="53"/>
    </location>
    <ligand>
        <name>Mg(2+)</name>
        <dbReference type="ChEBI" id="CHEBI:18420"/>
    </ligand>
</feature>
<feature type="binding site" evidence="1">
    <location>
        <begin position="73"/>
        <end position="77"/>
    </location>
    <ligand>
        <name>GTP</name>
        <dbReference type="ChEBI" id="CHEBI:37565"/>
    </ligand>
</feature>
<feature type="binding site" evidence="1">
    <location>
        <position position="75"/>
    </location>
    <ligand>
        <name>Mg(2+)</name>
        <dbReference type="ChEBI" id="CHEBI:18420"/>
    </ligand>
</feature>
<feature type="binding site" evidence="1">
    <location>
        <begin position="91"/>
        <end position="94"/>
    </location>
    <ligand>
        <name>GTP</name>
        <dbReference type="ChEBI" id="CHEBI:37565"/>
    </ligand>
</feature>
<feature type="binding site" evidence="1">
    <location>
        <begin position="158"/>
        <end position="161"/>
    </location>
    <ligand>
        <name>GTP</name>
        <dbReference type="ChEBI" id="CHEBI:37565"/>
    </ligand>
</feature>
<feature type="binding site" evidence="1">
    <location>
        <begin position="189"/>
        <end position="191"/>
    </location>
    <ligand>
        <name>GTP</name>
        <dbReference type="ChEBI" id="CHEBI:37565"/>
    </ligand>
</feature>
<reference key="1">
    <citation type="submission" date="2007-09" db="EMBL/GenBank/DDBJ databases">
        <title>Complete genome sequencing of Rickettsia bellii.</title>
        <authorList>
            <person name="Madan A."/>
            <person name="Lee H."/>
            <person name="Madan A."/>
            <person name="Yoon J.-G."/>
            <person name="Ryu G.-Y."/>
            <person name="Dasch G."/>
            <person name="Ereemeva M."/>
        </authorList>
    </citation>
    <scope>NUCLEOTIDE SEQUENCE [LARGE SCALE GENOMIC DNA]</scope>
    <source>
        <strain>OSU 85-389</strain>
    </source>
</reference>
<dbReference type="EMBL" id="CP000849">
    <property type="protein sequence ID" value="ABV78502.1"/>
    <property type="molecule type" value="Genomic_DNA"/>
</dbReference>
<dbReference type="SMR" id="A8GUK6"/>
<dbReference type="KEGG" id="rbo:A1I_00480"/>
<dbReference type="HOGENOM" id="CLU_033732_2_0_5"/>
<dbReference type="GO" id="GO:0005525">
    <property type="term" value="F:GTP binding"/>
    <property type="evidence" value="ECO:0007669"/>
    <property type="project" value="UniProtKB-UniRule"/>
</dbReference>
<dbReference type="GO" id="GO:0046872">
    <property type="term" value="F:metal ion binding"/>
    <property type="evidence" value="ECO:0007669"/>
    <property type="project" value="UniProtKB-KW"/>
</dbReference>
<dbReference type="GO" id="GO:0000917">
    <property type="term" value="P:division septum assembly"/>
    <property type="evidence" value="ECO:0007669"/>
    <property type="project" value="UniProtKB-KW"/>
</dbReference>
<dbReference type="CDD" id="cd01876">
    <property type="entry name" value="YihA_EngB"/>
    <property type="match status" value="1"/>
</dbReference>
<dbReference type="Gene3D" id="3.40.50.300">
    <property type="entry name" value="P-loop containing nucleotide triphosphate hydrolases"/>
    <property type="match status" value="1"/>
</dbReference>
<dbReference type="HAMAP" id="MF_00321">
    <property type="entry name" value="GTPase_EngB"/>
    <property type="match status" value="1"/>
</dbReference>
<dbReference type="InterPro" id="IPR030393">
    <property type="entry name" value="G_ENGB_dom"/>
</dbReference>
<dbReference type="InterPro" id="IPR006073">
    <property type="entry name" value="GTP-bd"/>
</dbReference>
<dbReference type="InterPro" id="IPR019987">
    <property type="entry name" value="GTP-bd_ribosome_bio_YsxC"/>
</dbReference>
<dbReference type="InterPro" id="IPR027417">
    <property type="entry name" value="P-loop_NTPase"/>
</dbReference>
<dbReference type="NCBIfam" id="TIGR03598">
    <property type="entry name" value="GTPase_YsxC"/>
    <property type="match status" value="1"/>
</dbReference>
<dbReference type="PANTHER" id="PTHR11649:SF13">
    <property type="entry name" value="ENGB-TYPE G DOMAIN-CONTAINING PROTEIN"/>
    <property type="match status" value="1"/>
</dbReference>
<dbReference type="PANTHER" id="PTHR11649">
    <property type="entry name" value="MSS1/TRME-RELATED GTP-BINDING PROTEIN"/>
    <property type="match status" value="1"/>
</dbReference>
<dbReference type="Pfam" id="PF01926">
    <property type="entry name" value="MMR_HSR1"/>
    <property type="match status" value="1"/>
</dbReference>
<dbReference type="SUPFAM" id="SSF52540">
    <property type="entry name" value="P-loop containing nucleoside triphosphate hydrolases"/>
    <property type="match status" value="1"/>
</dbReference>
<dbReference type="PROSITE" id="PS51706">
    <property type="entry name" value="G_ENGB"/>
    <property type="match status" value="1"/>
</dbReference>
<organism>
    <name type="scientific">Rickettsia bellii (strain OSU 85-389)</name>
    <dbReference type="NCBI Taxonomy" id="391896"/>
    <lineage>
        <taxon>Bacteria</taxon>
        <taxon>Pseudomonadati</taxon>
        <taxon>Pseudomonadota</taxon>
        <taxon>Alphaproteobacteria</taxon>
        <taxon>Rickettsiales</taxon>
        <taxon>Rickettsiaceae</taxon>
        <taxon>Rickettsieae</taxon>
        <taxon>Rickettsia</taxon>
        <taxon>belli group</taxon>
    </lineage>
</organism>
<evidence type="ECO:0000255" key="1">
    <source>
        <dbReference type="HAMAP-Rule" id="MF_00321"/>
    </source>
</evidence>
<proteinExistence type="inferred from homology"/>
<gene>
    <name evidence="1" type="primary">engB</name>
    <name type="ordered locus">A1I_00480</name>
</gene>
<accession>A8GUK6</accession>